<proteinExistence type="inferred from homology"/>
<gene>
    <name evidence="1" type="primary">rpoA</name>
</gene>
<reference key="1">
    <citation type="submission" date="2007-03" db="EMBL/GenBank/DDBJ databases">
        <title>Sequencing analysis of Lepidium virginicum JO26 chloroplast DNA.</title>
        <authorList>
            <person name="Hosouchi T."/>
            <person name="Tsuruoka H."/>
            <person name="Kotani H."/>
        </authorList>
    </citation>
    <scope>NUCLEOTIDE SEQUENCE [LARGE SCALE GENOMIC DNA]</scope>
</reference>
<name>RPOA_LEPVR</name>
<accession>A4QLD8</accession>
<feature type="chain" id="PRO_0000296895" description="DNA-directed RNA polymerase subunit alpha">
    <location>
        <begin position="1"/>
        <end position="327"/>
    </location>
</feature>
<feature type="region of interest" description="Alpha N-terminal domain (alpha-NTD)" evidence="1">
    <location>
        <begin position="1"/>
        <end position="233"/>
    </location>
</feature>
<feature type="region of interest" description="Alpha C-terminal domain (alpha-CTD)" evidence="1">
    <location>
        <begin position="267"/>
        <end position="327"/>
    </location>
</feature>
<evidence type="ECO:0000255" key="1">
    <source>
        <dbReference type="HAMAP-Rule" id="MF_00059"/>
    </source>
</evidence>
<protein>
    <recommendedName>
        <fullName evidence="1">DNA-directed RNA polymerase subunit alpha</fullName>
        <shortName evidence="1">PEP</shortName>
        <ecNumber evidence="1">2.7.7.6</ecNumber>
    </recommendedName>
    <alternativeName>
        <fullName evidence="1">Plastid-encoded RNA polymerase subunit alpha</fullName>
        <shortName evidence="1">RNA polymerase subunit alpha</shortName>
    </alternativeName>
</protein>
<geneLocation type="chloroplast"/>
<comment type="function">
    <text evidence="1">DNA-dependent RNA polymerase catalyzes the transcription of DNA into RNA using the four ribonucleoside triphosphates as substrates.</text>
</comment>
<comment type="catalytic activity">
    <reaction evidence="1">
        <text>RNA(n) + a ribonucleoside 5'-triphosphate = RNA(n+1) + diphosphate</text>
        <dbReference type="Rhea" id="RHEA:21248"/>
        <dbReference type="Rhea" id="RHEA-COMP:14527"/>
        <dbReference type="Rhea" id="RHEA-COMP:17342"/>
        <dbReference type="ChEBI" id="CHEBI:33019"/>
        <dbReference type="ChEBI" id="CHEBI:61557"/>
        <dbReference type="ChEBI" id="CHEBI:140395"/>
        <dbReference type="EC" id="2.7.7.6"/>
    </reaction>
</comment>
<comment type="subunit">
    <text evidence="1">In plastids the minimal PEP RNA polymerase catalytic core is composed of four subunits: alpha, beta, beta', and beta''. When a (nuclear-encoded) sigma factor is associated with the core the holoenzyme is formed, which can initiate transcription.</text>
</comment>
<comment type="subcellular location">
    <subcellularLocation>
        <location>Plastid</location>
        <location>Chloroplast</location>
    </subcellularLocation>
</comment>
<comment type="domain">
    <text evidence="1">The N-terminal domain is essential for RNAP assembly and basal transcription, whereas the C-terminal domain is involved in interaction with transcriptional regulators and with upstream promoter elements.</text>
</comment>
<comment type="similarity">
    <text evidence="1">Belongs to the RNA polymerase alpha chain family.</text>
</comment>
<organism>
    <name type="scientific">Lepidium virginicum</name>
    <name type="common">Virginia pepperweed</name>
    <dbReference type="NCBI Taxonomy" id="59292"/>
    <lineage>
        <taxon>Eukaryota</taxon>
        <taxon>Viridiplantae</taxon>
        <taxon>Streptophyta</taxon>
        <taxon>Embryophyta</taxon>
        <taxon>Tracheophyta</taxon>
        <taxon>Spermatophyta</taxon>
        <taxon>Magnoliopsida</taxon>
        <taxon>eudicotyledons</taxon>
        <taxon>Gunneridae</taxon>
        <taxon>Pentapetalae</taxon>
        <taxon>rosids</taxon>
        <taxon>malvids</taxon>
        <taxon>Brassicales</taxon>
        <taxon>Brassicaceae</taxon>
        <taxon>Lepidieae</taxon>
        <taxon>Lepidium</taxon>
    </lineage>
</organism>
<keyword id="KW-0150">Chloroplast</keyword>
<keyword id="KW-0240">DNA-directed RNA polymerase</keyword>
<keyword id="KW-0548">Nucleotidyltransferase</keyword>
<keyword id="KW-0934">Plastid</keyword>
<keyword id="KW-0804">Transcription</keyword>
<keyword id="KW-0808">Transferase</keyword>
<sequence length="327" mass="37890">MVREKVKVSTRTLQWKCVESRRDSKRLYYGRFILSPLMKGQADTIGIAMRRALLGEIEGTCITRAKSENIPHDYSNIVGIQESVHEILMNLNEIVLRSNLYGTRNALICVQGPGYITAQDIILPPSVEIIDNTQHIATLMEPIDLCIGLKIERNRGYSLKMSNNFEDRSYPIDAVFMPVQNANHSIHSYGNGNEKQEILFLEIWTNGSLTPKEALHEASRNLINLFIPFLHVEEETFYLENNQHQVTLPLFPFHNRLVNLRKKKKELAFQYIFIDQLELPPRIYNCLKKSNIHTLLDLLNNSQEDLIKIEHFHIEDVKKILDILEKK</sequence>
<dbReference type="EC" id="2.7.7.6" evidence="1"/>
<dbReference type="EMBL" id="AP009374">
    <property type="protein sequence ID" value="BAF50493.1"/>
    <property type="molecule type" value="Genomic_DNA"/>
</dbReference>
<dbReference type="RefSeq" id="YP_001123669.1">
    <property type="nucleotide sequence ID" value="NC_009273.1"/>
</dbReference>
<dbReference type="SMR" id="A4QLD8"/>
<dbReference type="GeneID" id="4962038"/>
<dbReference type="GO" id="GO:0009507">
    <property type="term" value="C:chloroplast"/>
    <property type="evidence" value="ECO:0007669"/>
    <property type="project" value="UniProtKB-SubCell"/>
</dbReference>
<dbReference type="GO" id="GO:0000428">
    <property type="term" value="C:DNA-directed RNA polymerase complex"/>
    <property type="evidence" value="ECO:0007669"/>
    <property type="project" value="UniProtKB-KW"/>
</dbReference>
<dbReference type="GO" id="GO:0005739">
    <property type="term" value="C:mitochondrion"/>
    <property type="evidence" value="ECO:0007669"/>
    <property type="project" value="GOC"/>
</dbReference>
<dbReference type="GO" id="GO:0003677">
    <property type="term" value="F:DNA binding"/>
    <property type="evidence" value="ECO:0007669"/>
    <property type="project" value="UniProtKB-UniRule"/>
</dbReference>
<dbReference type="GO" id="GO:0003899">
    <property type="term" value="F:DNA-directed RNA polymerase activity"/>
    <property type="evidence" value="ECO:0007669"/>
    <property type="project" value="UniProtKB-UniRule"/>
</dbReference>
<dbReference type="GO" id="GO:0046983">
    <property type="term" value="F:protein dimerization activity"/>
    <property type="evidence" value="ECO:0007669"/>
    <property type="project" value="InterPro"/>
</dbReference>
<dbReference type="GO" id="GO:0006351">
    <property type="term" value="P:DNA-templated transcription"/>
    <property type="evidence" value="ECO:0007669"/>
    <property type="project" value="UniProtKB-UniRule"/>
</dbReference>
<dbReference type="CDD" id="cd06928">
    <property type="entry name" value="RNAP_alpha_NTD"/>
    <property type="match status" value="1"/>
</dbReference>
<dbReference type="FunFam" id="2.170.120.12:FF:000001">
    <property type="entry name" value="DNA-directed RNA polymerase subunit alpha"/>
    <property type="match status" value="1"/>
</dbReference>
<dbReference type="FunFam" id="3.30.1360.10:FF:000039">
    <property type="entry name" value="DNA-directed RNA polymerase subunit alpha"/>
    <property type="match status" value="1"/>
</dbReference>
<dbReference type="Gene3D" id="1.10.150.20">
    <property type="entry name" value="5' to 3' exonuclease, C-terminal subdomain"/>
    <property type="match status" value="1"/>
</dbReference>
<dbReference type="Gene3D" id="2.170.120.12">
    <property type="entry name" value="DNA-directed RNA polymerase, insert domain"/>
    <property type="match status" value="1"/>
</dbReference>
<dbReference type="Gene3D" id="3.30.1360.10">
    <property type="entry name" value="RNA polymerase, RBP11-like subunit"/>
    <property type="match status" value="1"/>
</dbReference>
<dbReference type="HAMAP" id="MF_00059">
    <property type="entry name" value="RNApol_bact_RpoA"/>
    <property type="match status" value="1"/>
</dbReference>
<dbReference type="InterPro" id="IPR011262">
    <property type="entry name" value="DNA-dir_RNA_pol_insert"/>
</dbReference>
<dbReference type="InterPro" id="IPR011263">
    <property type="entry name" value="DNA-dir_RNA_pol_RpoA/D/Rpb3"/>
</dbReference>
<dbReference type="InterPro" id="IPR011773">
    <property type="entry name" value="DNA-dir_RpoA"/>
</dbReference>
<dbReference type="InterPro" id="IPR036603">
    <property type="entry name" value="RBP11-like"/>
</dbReference>
<dbReference type="InterPro" id="IPR011260">
    <property type="entry name" value="RNAP_asu_C"/>
</dbReference>
<dbReference type="InterPro" id="IPR036643">
    <property type="entry name" value="RNApol_insert_sf"/>
</dbReference>
<dbReference type="NCBIfam" id="TIGR02027">
    <property type="entry name" value="rpoA"/>
    <property type="match status" value="1"/>
</dbReference>
<dbReference type="Pfam" id="PF01000">
    <property type="entry name" value="RNA_pol_A_bac"/>
    <property type="match status" value="1"/>
</dbReference>
<dbReference type="Pfam" id="PF03118">
    <property type="entry name" value="RNA_pol_A_CTD"/>
    <property type="match status" value="1"/>
</dbReference>
<dbReference type="Pfam" id="PF01193">
    <property type="entry name" value="RNA_pol_L"/>
    <property type="match status" value="1"/>
</dbReference>
<dbReference type="SMART" id="SM00662">
    <property type="entry name" value="RPOLD"/>
    <property type="match status" value="1"/>
</dbReference>
<dbReference type="SUPFAM" id="SSF47789">
    <property type="entry name" value="C-terminal domain of RNA polymerase alpha subunit"/>
    <property type="match status" value="1"/>
</dbReference>
<dbReference type="SUPFAM" id="SSF56553">
    <property type="entry name" value="Insert subdomain of RNA polymerase alpha subunit"/>
    <property type="match status" value="1"/>
</dbReference>
<dbReference type="SUPFAM" id="SSF55257">
    <property type="entry name" value="RBP11-like subunits of RNA polymerase"/>
    <property type="match status" value="1"/>
</dbReference>